<accession>Q834N5</accession>
<dbReference type="EMBL" id="AE016830">
    <property type="protein sequence ID" value="AAO81392.1"/>
    <property type="molecule type" value="Genomic_DNA"/>
</dbReference>
<dbReference type="RefSeq" id="NP_815322.1">
    <property type="nucleotide sequence ID" value="NC_004668.1"/>
</dbReference>
<dbReference type="RefSeq" id="WP_002361848.1">
    <property type="nucleotide sequence ID" value="NZ_KE136528.1"/>
</dbReference>
<dbReference type="SMR" id="Q834N5"/>
<dbReference type="EnsemblBacteria" id="AAO81392">
    <property type="protein sequence ID" value="AAO81392"/>
    <property type="gene ID" value="EF_1609"/>
</dbReference>
<dbReference type="KEGG" id="efa:EF1609"/>
<dbReference type="PATRIC" id="fig|226185.45.peg.1898"/>
<dbReference type="eggNOG" id="COG4843">
    <property type="taxonomic scope" value="Bacteria"/>
</dbReference>
<dbReference type="HOGENOM" id="CLU_106166_1_0_9"/>
<dbReference type="Proteomes" id="UP000001415">
    <property type="component" value="Chromosome"/>
</dbReference>
<dbReference type="GO" id="GO:0005886">
    <property type="term" value="C:plasma membrane"/>
    <property type="evidence" value="ECO:0007669"/>
    <property type="project" value="UniProtKB-SubCell"/>
</dbReference>
<dbReference type="CDD" id="cd16381">
    <property type="entry name" value="YitT_C_like_1"/>
    <property type="match status" value="1"/>
</dbReference>
<dbReference type="HAMAP" id="MF_01515">
    <property type="entry name" value="UPF0316"/>
    <property type="match status" value="1"/>
</dbReference>
<dbReference type="InterPro" id="IPR019264">
    <property type="entry name" value="DUF2179"/>
</dbReference>
<dbReference type="InterPro" id="IPR044035">
    <property type="entry name" value="DUF5698"/>
</dbReference>
<dbReference type="InterPro" id="IPR022930">
    <property type="entry name" value="UPF0316"/>
</dbReference>
<dbReference type="NCBIfam" id="NF003194">
    <property type="entry name" value="PRK04164.1-5"/>
    <property type="match status" value="1"/>
</dbReference>
<dbReference type="PANTHER" id="PTHR40060">
    <property type="entry name" value="UPF0316 PROTEIN YEBE"/>
    <property type="match status" value="1"/>
</dbReference>
<dbReference type="PANTHER" id="PTHR40060:SF1">
    <property type="entry name" value="UPF0316 PROTEIN YEBE"/>
    <property type="match status" value="1"/>
</dbReference>
<dbReference type="Pfam" id="PF10035">
    <property type="entry name" value="DUF2179"/>
    <property type="match status" value="1"/>
</dbReference>
<dbReference type="Pfam" id="PF18955">
    <property type="entry name" value="DUF5698"/>
    <property type="match status" value="1"/>
</dbReference>
<proteinExistence type="inferred from homology"/>
<reference key="1">
    <citation type="journal article" date="2003" name="Science">
        <title>Role of mobile DNA in the evolution of vancomycin-resistant Enterococcus faecalis.</title>
        <authorList>
            <person name="Paulsen I.T."/>
            <person name="Banerjei L."/>
            <person name="Myers G.S.A."/>
            <person name="Nelson K.E."/>
            <person name="Seshadri R."/>
            <person name="Read T.D."/>
            <person name="Fouts D.E."/>
            <person name="Eisen J.A."/>
            <person name="Gill S.R."/>
            <person name="Heidelberg J.F."/>
            <person name="Tettelin H."/>
            <person name="Dodson R.J."/>
            <person name="Umayam L.A."/>
            <person name="Brinkac L.M."/>
            <person name="Beanan M.J."/>
            <person name="Daugherty S.C."/>
            <person name="DeBoy R.T."/>
            <person name="Durkin S.A."/>
            <person name="Kolonay J.F."/>
            <person name="Madupu R."/>
            <person name="Nelson W.C."/>
            <person name="Vamathevan J.J."/>
            <person name="Tran B."/>
            <person name="Upton J."/>
            <person name="Hansen T."/>
            <person name="Shetty J."/>
            <person name="Khouri H.M."/>
            <person name="Utterback T.R."/>
            <person name="Radune D."/>
            <person name="Ketchum K.A."/>
            <person name="Dougherty B.A."/>
            <person name="Fraser C.M."/>
        </authorList>
    </citation>
    <scope>NUCLEOTIDE SEQUENCE [LARGE SCALE GENOMIC DNA]</scope>
    <source>
        <strain>ATCC 700802 / V583</strain>
    </source>
</reference>
<protein>
    <recommendedName>
        <fullName evidence="1">UPF0316 protein EF_1609</fullName>
    </recommendedName>
</protein>
<feature type="chain" id="PRO_0000171942" description="UPF0316 protein EF_1609">
    <location>
        <begin position="1"/>
        <end position="183"/>
    </location>
</feature>
<feature type="transmembrane region" description="Helical" evidence="1">
    <location>
        <begin position="1"/>
        <end position="21"/>
    </location>
</feature>
<feature type="transmembrane region" description="Helical" evidence="1">
    <location>
        <begin position="35"/>
        <end position="55"/>
    </location>
</feature>
<feature type="transmembrane region" description="Helical" evidence="1">
    <location>
        <begin position="62"/>
        <end position="82"/>
    </location>
</feature>
<evidence type="ECO:0000255" key="1">
    <source>
        <dbReference type="HAMAP-Rule" id="MF_01515"/>
    </source>
</evidence>
<gene>
    <name type="ordered locus">EF_1609</name>
</gene>
<keyword id="KW-1003">Cell membrane</keyword>
<keyword id="KW-0472">Membrane</keyword>
<keyword id="KW-1185">Reference proteome</keyword>
<keyword id="KW-0812">Transmembrane</keyword>
<keyword id="KW-1133">Transmembrane helix</keyword>
<name>Y1609_ENTFA</name>
<sequence length="183" mass="20868">MVVDLKMLAMIFIINFAYITLNTIRFMLTMKGYRVIAPLVSMAEITIYVLGLSMVLNRLDNPLNLLVYALGYAVGISVGIKIEDYLALGYIMVSVILPSTTEQFHLPETLREHGYGVTQSVAYGREGERMVLEILSPRKNERTLYKLINQLEPRAFIISYEPKFISGGFWTKKVRKRNDAISH</sequence>
<organism>
    <name type="scientific">Enterococcus faecalis (strain ATCC 700802 / V583)</name>
    <dbReference type="NCBI Taxonomy" id="226185"/>
    <lineage>
        <taxon>Bacteria</taxon>
        <taxon>Bacillati</taxon>
        <taxon>Bacillota</taxon>
        <taxon>Bacilli</taxon>
        <taxon>Lactobacillales</taxon>
        <taxon>Enterococcaceae</taxon>
        <taxon>Enterococcus</taxon>
    </lineage>
</organism>
<comment type="subcellular location">
    <subcellularLocation>
        <location evidence="1">Cell membrane</location>
        <topology evidence="1">Multi-pass membrane protein</topology>
    </subcellularLocation>
</comment>
<comment type="similarity">
    <text evidence="1">Belongs to the UPF0316 family.</text>
</comment>